<comment type="function">
    <text>Cytochrome c oxidase is the component of the respiratory chain that catalyzes the reduction of oxygen to water. Subunits 1-3 form the functional core of the enzyme complex. Co I is the catalytic subunit of the enzyme. Electrons originating in cytochrome c are transferred via the copper A center of subunit 2 and a low-spin heme of subunit 1 to the bimetallic center formed by a high-spin heme and copper B.</text>
</comment>
<comment type="catalytic activity">
    <reaction>
        <text>4 Fe(II)-[cytochrome c] + O2 + 8 H(+)(in) = 4 Fe(III)-[cytochrome c] + 2 H2O + 4 H(+)(out)</text>
        <dbReference type="Rhea" id="RHEA:11436"/>
        <dbReference type="Rhea" id="RHEA-COMP:10350"/>
        <dbReference type="Rhea" id="RHEA-COMP:14399"/>
        <dbReference type="ChEBI" id="CHEBI:15377"/>
        <dbReference type="ChEBI" id="CHEBI:15378"/>
        <dbReference type="ChEBI" id="CHEBI:15379"/>
        <dbReference type="ChEBI" id="CHEBI:29033"/>
        <dbReference type="ChEBI" id="CHEBI:29034"/>
        <dbReference type="EC" id="7.1.1.9"/>
    </reaction>
</comment>
<comment type="subunit">
    <text>This alternate cytochrome c oxidase consists of a subunit I and two cytochromes c. Equivalents to subunit 2 and 3 are not present in this complex.</text>
</comment>
<comment type="subcellular location">
    <subcellularLocation>
        <location>Cell membrane</location>
        <topology>Multi-pass membrane protein</topology>
    </subcellularLocation>
</comment>
<comment type="developmental stage">
    <text>Bacteroid (nitrogen-fixing endosymbiont).</text>
</comment>
<comment type="similarity">
    <text evidence="3">Belongs to the heme-copper respiratory oxidase family.</text>
</comment>
<reference key="1">
    <citation type="journal article" date="1992" name="Arch. Microbiol.">
        <title>Genes for a second terminal oxidase in Bradyrhizobium japonicum.</title>
        <authorList>
            <person name="Bott M."/>
            <person name="Preisig O."/>
            <person name="Hennecke H."/>
        </authorList>
    </citation>
    <scope>NUCLEOTIDE SEQUENCE [GENOMIC DNA]</scope>
    <source>
        <strain>USDA 110spc4</strain>
    </source>
</reference>
<reference key="2">
    <citation type="journal article" date="2002" name="DNA Res.">
        <title>Complete genomic sequence of nitrogen-fixing symbiotic bacterium Bradyrhizobium japonicum USDA110.</title>
        <authorList>
            <person name="Kaneko T."/>
            <person name="Nakamura Y."/>
            <person name="Sato S."/>
            <person name="Minamisawa K."/>
            <person name="Uchiumi T."/>
            <person name="Sasamoto S."/>
            <person name="Watanabe A."/>
            <person name="Idesawa K."/>
            <person name="Iriguchi M."/>
            <person name="Kawashima K."/>
            <person name="Kohara M."/>
            <person name="Matsumoto M."/>
            <person name="Shimpo S."/>
            <person name="Tsuruoka H."/>
            <person name="Wada T."/>
            <person name="Yamada M."/>
            <person name="Tabata S."/>
        </authorList>
    </citation>
    <scope>NUCLEOTIDE SEQUENCE [LARGE SCALE GENOMIC DNA]</scope>
    <source>
        <strain>JCM 10833 / BCRC 13528 / IAM 13628 / NBRC 14792 / USDA 110</strain>
    </source>
</reference>
<protein>
    <recommendedName>
        <fullName>Alternative cytochrome c oxidase subunit 1</fullName>
        <ecNumber>7.1.1.9</ecNumber>
    </recommendedName>
    <alternativeName>
        <fullName>Alternative cytochrome c oxidase polypeptide I</fullName>
    </alternativeName>
    <alternativeName>
        <fullName>Cytochrome BB3 subunit 1</fullName>
    </alternativeName>
    <alternativeName>
        <fullName>Oxidase BB(3) subunit 1</fullName>
    </alternativeName>
</protein>
<keyword id="KW-1003">Cell membrane</keyword>
<keyword id="KW-0186">Copper</keyword>
<keyword id="KW-0249">Electron transport</keyword>
<keyword id="KW-0349">Heme</keyword>
<keyword id="KW-0408">Iron</keyword>
<keyword id="KW-0472">Membrane</keyword>
<keyword id="KW-0479">Metal-binding</keyword>
<keyword id="KW-1185">Reference proteome</keyword>
<keyword id="KW-0679">Respiratory chain</keyword>
<keyword id="KW-1278">Translocase</keyword>
<keyword id="KW-0812">Transmembrane</keyword>
<keyword id="KW-1133">Transmembrane helix</keyword>
<keyword id="KW-0813">Transport</keyword>
<accession>P98000</accession>
<evidence type="ECO:0000250" key="1"/>
<evidence type="ECO:0000255" key="2"/>
<evidence type="ECO:0000305" key="3"/>
<proteinExistence type="evidence at transcript level"/>
<sequence length="591" mass="65654">MVDVPYDRIADIPPAEVPDVELYHPRSWWTRYVFSQDAKVIAIQYSLTASAIGLVALVLSWLMRLQLGFPGTFSFIDANQYLQFITMHGMIMVIYLLTALFLGGFGNYLIPLMVGARDMVFPYVNMLSYWVYLLAVLVLASAFFVPGGPTGAGWTLYPPQAILSGTPGQDWGIVLMLSSLILFIIGFTMGGLNYVVTVLQARTRGMTLMRLPLTVWGIFTATVMALLAFPALFVGSVMLLLDRLLGTSFFMPTLVEMGQLSKYGGGSPLLFQHLFWFFGHPEVYIVALPAFGIVSDLISTHARKNIFGYRMMVWAIVAIGALSFVVWAHHMYVSGMYPYFGFFFATTTLIIAIPTAIKVYNWVLTLWHGDIHLTVPMLFALGFIITFVNGGLTGLFLGNVVVDVPLSDTMFVVAHFHMVMGVAPIMVVLGAIYHWYPKVTGRMLNDVLGKFHFWVTFLGAYLIFFPMHYLGLLGVPRRYFELGDAAFIPPSAHSLNAFITVVALTVGFAQMVFLFNLVWSLFEGEPSGGNPWRATTLEWQTPETPPGHGNWGKQLPIVYRWAYDYSVPGAAQDFIPQNQPPPTGAVQGVAP</sequence>
<feature type="chain" id="PRO_0000183454" description="Alternative cytochrome c oxidase subunit 1">
    <location>
        <begin position="1"/>
        <end position="591"/>
    </location>
</feature>
<feature type="transmembrane region" description="Helical" evidence="2">
    <location>
        <begin position="40"/>
        <end position="60"/>
    </location>
</feature>
<feature type="transmembrane region" description="Helical" evidence="2">
    <location>
        <begin position="90"/>
        <end position="110"/>
    </location>
</feature>
<feature type="transmembrane region" description="Helical" evidence="2">
    <location>
        <begin position="126"/>
        <end position="146"/>
    </location>
</feature>
<feature type="transmembrane region" description="Helical" evidence="2">
    <location>
        <begin position="172"/>
        <end position="192"/>
    </location>
</feature>
<feature type="transmembrane region" description="Helical" evidence="2">
    <location>
        <begin position="215"/>
        <end position="235"/>
    </location>
</feature>
<feature type="transmembrane region" description="Helical" evidence="2">
    <location>
        <begin position="274"/>
        <end position="294"/>
    </location>
</feature>
<feature type="transmembrane region" description="Helical" evidence="2">
    <location>
        <begin position="313"/>
        <end position="333"/>
    </location>
</feature>
<feature type="transmembrane region" description="Helical" evidence="2">
    <location>
        <begin position="337"/>
        <end position="357"/>
    </location>
</feature>
<feature type="transmembrane region" description="Helical" evidence="2">
    <location>
        <begin position="377"/>
        <end position="397"/>
    </location>
</feature>
<feature type="transmembrane region" description="Helical" evidence="2">
    <location>
        <begin position="412"/>
        <end position="432"/>
    </location>
</feature>
<feature type="transmembrane region" description="Helical" evidence="2">
    <location>
        <begin position="453"/>
        <end position="473"/>
    </location>
</feature>
<feature type="transmembrane region" description="Helical" evidence="2">
    <location>
        <begin position="498"/>
        <end position="518"/>
    </location>
</feature>
<feature type="binding site" description="axial binding residue" evidence="3">
    <location>
        <position position="88"/>
    </location>
    <ligand>
        <name>heme b</name>
        <dbReference type="ChEBI" id="CHEBI:60344"/>
        <label>1; low-spin</label>
    </ligand>
    <ligandPart>
        <name>Fe</name>
        <dbReference type="ChEBI" id="CHEBI:18248"/>
    </ligandPart>
</feature>
<feature type="binding site" evidence="3">
    <location>
        <position position="280"/>
    </location>
    <ligand>
        <name>Cu cation</name>
        <dbReference type="ChEBI" id="CHEBI:23378"/>
        <label>B</label>
    </ligand>
</feature>
<feature type="binding site" evidence="3">
    <location>
        <position position="284"/>
    </location>
    <ligand>
        <name>Cu cation</name>
        <dbReference type="ChEBI" id="CHEBI:23378"/>
        <label>B</label>
    </ligand>
</feature>
<feature type="binding site" evidence="3">
    <location>
        <position position="329"/>
    </location>
    <ligand>
        <name>Cu cation</name>
        <dbReference type="ChEBI" id="CHEBI:23378"/>
        <label>B</label>
    </ligand>
</feature>
<feature type="binding site" evidence="3">
    <location>
        <position position="330"/>
    </location>
    <ligand>
        <name>Cu cation</name>
        <dbReference type="ChEBI" id="CHEBI:23378"/>
        <label>B</label>
    </ligand>
</feature>
<feature type="binding site" description="axial binding residue" evidence="3">
    <location>
        <position position="415"/>
    </location>
    <ligand>
        <name>heme b</name>
        <dbReference type="ChEBI" id="CHEBI:60344"/>
        <label>2; high-spin</label>
    </ligand>
    <ligandPart>
        <name>Fe</name>
        <dbReference type="ChEBI" id="CHEBI:18248"/>
    </ligandPart>
</feature>
<feature type="binding site" description="axial binding residue" evidence="3">
    <location>
        <position position="417"/>
    </location>
    <ligand>
        <name>heme b</name>
        <dbReference type="ChEBI" id="CHEBI:60344"/>
        <label>1; low-spin</label>
    </ligand>
    <ligandPart>
        <name>Fe</name>
        <dbReference type="ChEBI" id="CHEBI:18248"/>
    </ligandPart>
</feature>
<feature type="cross-link" description="1'-histidyl-3'-tyrosine (His-Tyr)" evidence="1">
    <location>
        <begin position="280"/>
        <end position="284"/>
    </location>
</feature>
<gene>
    <name type="primary">coxN</name>
    <name type="ordered locus">bll3784</name>
</gene>
<organism>
    <name type="scientific">Bradyrhizobium diazoefficiens (strain JCM 10833 / BCRC 13528 / IAM 13628 / NBRC 14792 / USDA 110)</name>
    <dbReference type="NCBI Taxonomy" id="224911"/>
    <lineage>
        <taxon>Bacteria</taxon>
        <taxon>Pseudomonadati</taxon>
        <taxon>Pseudomonadota</taxon>
        <taxon>Alphaproteobacteria</taxon>
        <taxon>Hyphomicrobiales</taxon>
        <taxon>Nitrobacteraceae</taxon>
        <taxon>Bradyrhizobium</taxon>
    </lineage>
</organism>
<name>COXN_BRADU</name>
<dbReference type="EC" id="7.1.1.9"/>
<dbReference type="EMBL" id="X68547">
    <property type="protein sequence ID" value="CAA48548.1"/>
    <property type="molecule type" value="Genomic_DNA"/>
</dbReference>
<dbReference type="EMBL" id="BA000040">
    <property type="protein sequence ID" value="BAC49049.1"/>
    <property type="molecule type" value="Genomic_DNA"/>
</dbReference>
<dbReference type="PIR" id="C48364">
    <property type="entry name" value="C48364"/>
</dbReference>
<dbReference type="RefSeq" id="NP_770424.1">
    <property type="nucleotide sequence ID" value="NC_004463.1"/>
</dbReference>
<dbReference type="RefSeq" id="WP_011086565.1">
    <property type="nucleotide sequence ID" value="NC_004463.1"/>
</dbReference>
<dbReference type="SMR" id="P98000"/>
<dbReference type="STRING" id="224911.AAV28_15905"/>
<dbReference type="EnsemblBacteria" id="BAC49049">
    <property type="protein sequence ID" value="BAC49049"/>
    <property type="gene ID" value="BAC49049"/>
</dbReference>
<dbReference type="GeneID" id="46490790"/>
<dbReference type="KEGG" id="bja:bll3784"/>
<dbReference type="PATRIC" id="fig|224911.44.peg.3452"/>
<dbReference type="eggNOG" id="COG0843">
    <property type="taxonomic scope" value="Bacteria"/>
</dbReference>
<dbReference type="HOGENOM" id="CLU_011899_7_3_5"/>
<dbReference type="InParanoid" id="P98000"/>
<dbReference type="OrthoDB" id="9803294at2"/>
<dbReference type="PhylomeDB" id="P98000"/>
<dbReference type="Proteomes" id="UP000002526">
    <property type="component" value="Chromosome"/>
</dbReference>
<dbReference type="GO" id="GO:0005886">
    <property type="term" value="C:plasma membrane"/>
    <property type="evidence" value="ECO:0007669"/>
    <property type="project" value="UniProtKB-SubCell"/>
</dbReference>
<dbReference type="GO" id="GO:0004129">
    <property type="term" value="F:cytochrome-c oxidase activity"/>
    <property type="evidence" value="ECO:0007669"/>
    <property type="project" value="UniProtKB-EC"/>
</dbReference>
<dbReference type="GO" id="GO:0020037">
    <property type="term" value="F:heme binding"/>
    <property type="evidence" value="ECO:0007669"/>
    <property type="project" value="InterPro"/>
</dbReference>
<dbReference type="GO" id="GO:0046872">
    <property type="term" value="F:metal ion binding"/>
    <property type="evidence" value="ECO:0007669"/>
    <property type="project" value="UniProtKB-KW"/>
</dbReference>
<dbReference type="GO" id="GO:0009060">
    <property type="term" value="P:aerobic respiration"/>
    <property type="evidence" value="ECO:0000318"/>
    <property type="project" value="GO_Central"/>
</dbReference>
<dbReference type="GO" id="GO:0022904">
    <property type="term" value="P:respiratory electron transport chain"/>
    <property type="evidence" value="ECO:0000318"/>
    <property type="project" value="GO_Central"/>
</dbReference>
<dbReference type="FunFam" id="1.20.210.10:FF:000018">
    <property type="entry name" value="Cytochrome c oxidase subunit I"/>
    <property type="match status" value="1"/>
</dbReference>
<dbReference type="Gene3D" id="1.20.210.10">
    <property type="entry name" value="Cytochrome c oxidase-like, subunit I domain"/>
    <property type="match status" value="1"/>
</dbReference>
<dbReference type="InterPro" id="IPR023616">
    <property type="entry name" value="Cyt_c_oxase-like_su1_dom"/>
</dbReference>
<dbReference type="InterPro" id="IPR036927">
    <property type="entry name" value="Cyt_c_oxase-like_su1_sf"/>
</dbReference>
<dbReference type="InterPro" id="IPR000883">
    <property type="entry name" value="Cyt_C_Oxase_1"/>
</dbReference>
<dbReference type="InterPro" id="IPR023615">
    <property type="entry name" value="Cyt_c_Oxase_su1_BS"/>
</dbReference>
<dbReference type="PANTHER" id="PTHR10422">
    <property type="entry name" value="CYTOCHROME C OXIDASE SUBUNIT 1"/>
    <property type="match status" value="1"/>
</dbReference>
<dbReference type="PANTHER" id="PTHR10422:SF18">
    <property type="entry name" value="CYTOCHROME C OXIDASE SUBUNIT 1"/>
    <property type="match status" value="1"/>
</dbReference>
<dbReference type="Pfam" id="PF00115">
    <property type="entry name" value="COX1"/>
    <property type="match status" value="1"/>
</dbReference>
<dbReference type="PRINTS" id="PR01165">
    <property type="entry name" value="CYCOXIDASEI"/>
</dbReference>
<dbReference type="SUPFAM" id="SSF81442">
    <property type="entry name" value="Cytochrome c oxidase subunit I-like"/>
    <property type="match status" value="1"/>
</dbReference>
<dbReference type="PROSITE" id="PS50855">
    <property type="entry name" value="COX1"/>
    <property type="match status" value="1"/>
</dbReference>
<dbReference type="PROSITE" id="PS00077">
    <property type="entry name" value="COX1_CUB"/>
    <property type="match status" value="1"/>
</dbReference>